<proteinExistence type="inferred from homology"/>
<accession>Q13X29</accession>
<dbReference type="EC" id="6.1.1.21" evidence="1"/>
<dbReference type="EMBL" id="CP000270">
    <property type="protein sequence ID" value="ABE31360.1"/>
    <property type="molecule type" value="Genomic_DNA"/>
</dbReference>
<dbReference type="RefSeq" id="WP_011488943.1">
    <property type="nucleotide sequence ID" value="NC_007951.1"/>
</dbReference>
<dbReference type="SMR" id="Q13X29"/>
<dbReference type="STRING" id="266265.Bxe_A1595"/>
<dbReference type="KEGG" id="bxb:DR64_3755"/>
<dbReference type="KEGG" id="bxe:Bxe_A1595"/>
<dbReference type="PATRIC" id="fig|266265.5.peg.2963"/>
<dbReference type="eggNOG" id="COG0124">
    <property type="taxonomic scope" value="Bacteria"/>
</dbReference>
<dbReference type="OrthoDB" id="9800814at2"/>
<dbReference type="Proteomes" id="UP000001817">
    <property type="component" value="Chromosome 1"/>
</dbReference>
<dbReference type="GO" id="GO:0005737">
    <property type="term" value="C:cytoplasm"/>
    <property type="evidence" value="ECO:0007669"/>
    <property type="project" value="UniProtKB-SubCell"/>
</dbReference>
<dbReference type="GO" id="GO:0005524">
    <property type="term" value="F:ATP binding"/>
    <property type="evidence" value="ECO:0007669"/>
    <property type="project" value="UniProtKB-UniRule"/>
</dbReference>
<dbReference type="GO" id="GO:0004821">
    <property type="term" value="F:histidine-tRNA ligase activity"/>
    <property type="evidence" value="ECO:0007669"/>
    <property type="project" value="UniProtKB-UniRule"/>
</dbReference>
<dbReference type="GO" id="GO:0006427">
    <property type="term" value="P:histidyl-tRNA aminoacylation"/>
    <property type="evidence" value="ECO:0007669"/>
    <property type="project" value="UniProtKB-UniRule"/>
</dbReference>
<dbReference type="CDD" id="cd00773">
    <property type="entry name" value="HisRS-like_core"/>
    <property type="match status" value="1"/>
</dbReference>
<dbReference type="CDD" id="cd00859">
    <property type="entry name" value="HisRS_anticodon"/>
    <property type="match status" value="1"/>
</dbReference>
<dbReference type="FunFam" id="3.30.930.10:FF:000005">
    <property type="entry name" value="Histidine--tRNA ligase"/>
    <property type="match status" value="1"/>
</dbReference>
<dbReference type="Gene3D" id="3.40.50.800">
    <property type="entry name" value="Anticodon-binding domain"/>
    <property type="match status" value="1"/>
</dbReference>
<dbReference type="Gene3D" id="3.30.930.10">
    <property type="entry name" value="Bira Bifunctional Protein, Domain 2"/>
    <property type="match status" value="1"/>
</dbReference>
<dbReference type="HAMAP" id="MF_00127">
    <property type="entry name" value="His_tRNA_synth"/>
    <property type="match status" value="1"/>
</dbReference>
<dbReference type="InterPro" id="IPR006195">
    <property type="entry name" value="aa-tRNA-synth_II"/>
</dbReference>
<dbReference type="InterPro" id="IPR045864">
    <property type="entry name" value="aa-tRNA-synth_II/BPL/LPL"/>
</dbReference>
<dbReference type="InterPro" id="IPR004154">
    <property type="entry name" value="Anticodon-bd"/>
</dbReference>
<dbReference type="InterPro" id="IPR036621">
    <property type="entry name" value="Anticodon-bd_dom_sf"/>
</dbReference>
<dbReference type="InterPro" id="IPR015807">
    <property type="entry name" value="His-tRNA-ligase"/>
</dbReference>
<dbReference type="InterPro" id="IPR041715">
    <property type="entry name" value="HisRS-like_core"/>
</dbReference>
<dbReference type="InterPro" id="IPR004516">
    <property type="entry name" value="HisRS/HisZ"/>
</dbReference>
<dbReference type="InterPro" id="IPR033656">
    <property type="entry name" value="HisRS_anticodon"/>
</dbReference>
<dbReference type="NCBIfam" id="TIGR00442">
    <property type="entry name" value="hisS"/>
    <property type="match status" value="1"/>
</dbReference>
<dbReference type="PANTHER" id="PTHR43707:SF1">
    <property type="entry name" value="HISTIDINE--TRNA LIGASE, MITOCHONDRIAL-RELATED"/>
    <property type="match status" value="1"/>
</dbReference>
<dbReference type="PANTHER" id="PTHR43707">
    <property type="entry name" value="HISTIDYL-TRNA SYNTHETASE"/>
    <property type="match status" value="1"/>
</dbReference>
<dbReference type="Pfam" id="PF03129">
    <property type="entry name" value="HGTP_anticodon"/>
    <property type="match status" value="1"/>
</dbReference>
<dbReference type="Pfam" id="PF13393">
    <property type="entry name" value="tRNA-synt_His"/>
    <property type="match status" value="1"/>
</dbReference>
<dbReference type="PIRSF" id="PIRSF001549">
    <property type="entry name" value="His-tRNA_synth"/>
    <property type="match status" value="1"/>
</dbReference>
<dbReference type="SUPFAM" id="SSF52954">
    <property type="entry name" value="Class II aaRS ABD-related"/>
    <property type="match status" value="1"/>
</dbReference>
<dbReference type="SUPFAM" id="SSF55681">
    <property type="entry name" value="Class II aaRS and biotin synthetases"/>
    <property type="match status" value="1"/>
</dbReference>
<dbReference type="PROSITE" id="PS50862">
    <property type="entry name" value="AA_TRNA_LIGASE_II"/>
    <property type="match status" value="1"/>
</dbReference>
<evidence type="ECO:0000255" key="1">
    <source>
        <dbReference type="HAMAP-Rule" id="MF_00127"/>
    </source>
</evidence>
<organism>
    <name type="scientific">Paraburkholderia xenovorans (strain LB400)</name>
    <dbReference type="NCBI Taxonomy" id="266265"/>
    <lineage>
        <taxon>Bacteria</taxon>
        <taxon>Pseudomonadati</taxon>
        <taxon>Pseudomonadota</taxon>
        <taxon>Betaproteobacteria</taxon>
        <taxon>Burkholderiales</taxon>
        <taxon>Burkholderiaceae</taxon>
        <taxon>Paraburkholderia</taxon>
    </lineage>
</organism>
<reference key="1">
    <citation type="journal article" date="2006" name="Proc. Natl. Acad. Sci. U.S.A.">
        <title>Burkholderia xenovorans LB400 harbors a multi-replicon, 9.73-Mbp genome shaped for versatility.</title>
        <authorList>
            <person name="Chain P.S.G."/>
            <person name="Denef V.J."/>
            <person name="Konstantinidis K.T."/>
            <person name="Vergez L.M."/>
            <person name="Agullo L."/>
            <person name="Reyes V.L."/>
            <person name="Hauser L."/>
            <person name="Cordova M."/>
            <person name="Gomez L."/>
            <person name="Gonzalez M."/>
            <person name="Land M."/>
            <person name="Lao V."/>
            <person name="Larimer F."/>
            <person name="LiPuma J.J."/>
            <person name="Mahenthiralingam E."/>
            <person name="Malfatti S.A."/>
            <person name="Marx C.J."/>
            <person name="Parnell J.J."/>
            <person name="Ramette A."/>
            <person name="Richardson P."/>
            <person name="Seeger M."/>
            <person name="Smith D."/>
            <person name="Spilker T."/>
            <person name="Sul W.J."/>
            <person name="Tsoi T.V."/>
            <person name="Ulrich L.E."/>
            <person name="Zhulin I.B."/>
            <person name="Tiedje J.M."/>
        </authorList>
    </citation>
    <scope>NUCLEOTIDE SEQUENCE [LARGE SCALE GENOMIC DNA]</scope>
    <source>
        <strain>LB400</strain>
    </source>
</reference>
<protein>
    <recommendedName>
        <fullName evidence="1">Histidine--tRNA ligase</fullName>
        <ecNumber evidence="1">6.1.1.21</ecNumber>
    </recommendedName>
    <alternativeName>
        <fullName evidence="1">Histidyl-tRNA synthetase</fullName>
        <shortName evidence="1">HisRS</shortName>
    </alternativeName>
</protein>
<gene>
    <name evidence="1" type="primary">hisS</name>
    <name type="ordered locus">Bxeno_A2822</name>
    <name type="ORF">Bxe_A1595</name>
</gene>
<feature type="chain" id="PRO_1000016331" description="Histidine--tRNA ligase">
    <location>
        <begin position="1"/>
        <end position="446"/>
    </location>
</feature>
<sequence length="446" mass="49931">MTEQKKKLEKLSGVKGMNDILPQEAGLWEFFETTVKSMLRSYGYQNIRTPIIEHTQLFKRGIGEVTDIVEKEMYSFTDALNGENLTMRPENTAAVVRAAIEHNMLYDGPKRLWYIGPMFRHERPQRGRYRQFHQVGVEALGFAGPDADAEIIMMCQRLWDDLGLMGIKLELNSLGLAHERAAHRVELIAYLEKHMDVLDEEAKRRLYTNPLRVLDTKNPAMQEVAQNAPKLIDFLGEESRAHFEGLQRILKANNIPFTINQRLVRGLDYYNLTVFEWVTDKLGAQGTVAAGGRYDPLIEQLGGKPTAACGWAMGIERILELLKEEQLVPEDEGCDVYVVHQGEAAREQAFIIAERLRDTGLDVILHCSADGQTASFKSQMKRADASGAAFAVVLGEDEIANGTVGVKPLRDTNADGGKNEQHNVPAEDLTEFLINAMVATAEDGDD</sequence>
<name>SYH_PARXL</name>
<comment type="catalytic activity">
    <reaction evidence="1">
        <text>tRNA(His) + L-histidine + ATP = L-histidyl-tRNA(His) + AMP + diphosphate + H(+)</text>
        <dbReference type="Rhea" id="RHEA:17313"/>
        <dbReference type="Rhea" id="RHEA-COMP:9665"/>
        <dbReference type="Rhea" id="RHEA-COMP:9689"/>
        <dbReference type="ChEBI" id="CHEBI:15378"/>
        <dbReference type="ChEBI" id="CHEBI:30616"/>
        <dbReference type="ChEBI" id="CHEBI:33019"/>
        <dbReference type="ChEBI" id="CHEBI:57595"/>
        <dbReference type="ChEBI" id="CHEBI:78442"/>
        <dbReference type="ChEBI" id="CHEBI:78527"/>
        <dbReference type="ChEBI" id="CHEBI:456215"/>
        <dbReference type="EC" id="6.1.1.21"/>
    </reaction>
</comment>
<comment type="subunit">
    <text evidence="1">Homodimer.</text>
</comment>
<comment type="subcellular location">
    <subcellularLocation>
        <location evidence="1">Cytoplasm</location>
    </subcellularLocation>
</comment>
<comment type="similarity">
    <text evidence="1">Belongs to the class-II aminoacyl-tRNA synthetase family.</text>
</comment>
<keyword id="KW-0030">Aminoacyl-tRNA synthetase</keyword>
<keyword id="KW-0067">ATP-binding</keyword>
<keyword id="KW-0963">Cytoplasm</keyword>
<keyword id="KW-0436">Ligase</keyword>
<keyword id="KW-0547">Nucleotide-binding</keyword>
<keyword id="KW-0648">Protein biosynthesis</keyword>
<keyword id="KW-1185">Reference proteome</keyword>